<reference key="1">
    <citation type="journal article" date="2006" name="Genome Biol.">
        <title>Genomic analysis reveals that Pseudomonas aeruginosa virulence is combinatorial.</title>
        <authorList>
            <person name="Lee D.G."/>
            <person name="Urbach J.M."/>
            <person name="Wu G."/>
            <person name="Liberati N.T."/>
            <person name="Feinbaum R.L."/>
            <person name="Miyata S."/>
            <person name="Diggins L.T."/>
            <person name="He J."/>
            <person name="Saucier M."/>
            <person name="Deziel E."/>
            <person name="Friedman L."/>
            <person name="Li L."/>
            <person name="Grills G."/>
            <person name="Montgomery K."/>
            <person name="Kucherlapati R."/>
            <person name="Rahme L.G."/>
            <person name="Ausubel F.M."/>
        </authorList>
    </citation>
    <scope>NUCLEOTIDE SEQUENCE [LARGE SCALE GENOMIC DNA]</scope>
    <source>
        <strain>UCBPP-PA14</strain>
    </source>
</reference>
<proteinExistence type="inferred from homology"/>
<name>DER_PSEAB</name>
<dbReference type="EMBL" id="CP000438">
    <property type="protein sequence ID" value="ABJ13060.1"/>
    <property type="molecule type" value="Genomic_DNA"/>
</dbReference>
<dbReference type="RefSeq" id="WP_003137857.1">
    <property type="nucleotide sequence ID" value="NZ_CP034244.1"/>
</dbReference>
<dbReference type="SMR" id="Q02RV3"/>
<dbReference type="KEGG" id="pau:PA14_14930"/>
<dbReference type="PseudoCAP" id="PA14_14930"/>
<dbReference type="HOGENOM" id="CLU_016077_6_2_6"/>
<dbReference type="BioCyc" id="PAER208963:G1G74-1223-MONOMER"/>
<dbReference type="Proteomes" id="UP000000653">
    <property type="component" value="Chromosome"/>
</dbReference>
<dbReference type="GO" id="GO:0005525">
    <property type="term" value="F:GTP binding"/>
    <property type="evidence" value="ECO:0007669"/>
    <property type="project" value="UniProtKB-UniRule"/>
</dbReference>
<dbReference type="GO" id="GO:0043022">
    <property type="term" value="F:ribosome binding"/>
    <property type="evidence" value="ECO:0007669"/>
    <property type="project" value="TreeGrafter"/>
</dbReference>
<dbReference type="GO" id="GO:0042254">
    <property type="term" value="P:ribosome biogenesis"/>
    <property type="evidence" value="ECO:0007669"/>
    <property type="project" value="UniProtKB-KW"/>
</dbReference>
<dbReference type="CDD" id="cd01894">
    <property type="entry name" value="EngA1"/>
    <property type="match status" value="1"/>
</dbReference>
<dbReference type="CDD" id="cd01895">
    <property type="entry name" value="EngA2"/>
    <property type="match status" value="1"/>
</dbReference>
<dbReference type="FunFam" id="3.30.300.20:FF:000004">
    <property type="entry name" value="GTPase Der"/>
    <property type="match status" value="1"/>
</dbReference>
<dbReference type="FunFam" id="3.40.50.300:FF:000040">
    <property type="entry name" value="GTPase Der"/>
    <property type="match status" value="1"/>
</dbReference>
<dbReference type="FunFam" id="3.40.50.300:FF:000057">
    <property type="entry name" value="GTPase Der"/>
    <property type="match status" value="1"/>
</dbReference>
<dbReference type="Gene3D" id="3.30.300.20">
    <property type="match status" value="1"/>
</dbReference>
<dbReference type="Gene3D" id="3.40.50.300">
    <property type="entry name" value="P-loop containing nucleotide triphosphate hydrolases"/>
    <property type="match status" value="2"/>
</dbReference>
<dbReference type="HAMAP" id="MF_00195">
    <property type="entry name" value="GTPase_Der"/>
    <property type="match status" value="1"/>
</dbReference>
<dbReference type="InterPro" id="IPR031166">
    <property type="entry name" value="G_ENGA"/>
</dbReference>
<dbReference type="InterPro" id="IPR006073">
    <property type="entry name" value="GTP-bd"/>
</dbReference>
<dbReference type="InterPro" id="IPR016484">
    <property type="entry name" value="GTPase_Der"/>
</dbReference>
<dbReference type="InterPro" id="IPR032859">
    <property type="entry name" value="KH_dom-like"/>
</dbReference>
<dbReference type="InterPro" id="IPR015946">
    <property type="entry name" value="KH_dom-like_a/b"/>
</dbReference>
<dbReference type="InterPro" id="IPR027417">
    <property type="entry name" value="P-loop_NTPase"/>
</dbReference>
<dbReference type="InterPro" id="IPR005225">
    <property type="entry name" value="Small_GTP-bd"/>
</dbReference>
<dbReference type="NCBIfam" id="TIGR03594">
    <property type="entry name" value="GTPase_EngA"/>
    <property type="match status" value="1"/>
</dbReference>
<dbReference type="NCBIfam" id="TIGR00231">
    <property type="entry name" value="small_GTP"/>
    <property type="match status" value="2"/>
</dbReference>
<dbReference type="PANTHER" id="PTHR43834">
    <property type="entry name" value="GTPASE DER"/>
    <property type="match status" value="1"/>
</dbReference>
<dbReference type="PANTHER" id="PTHR43834:SF6">
    <property type="entry name" value="GTPASE DER"/>
    <property type="match status" value="1"/>
</dbReference>
<dbReference type="Pfam" id="PF14714">
    <property type="entry name" value="KH_dom-like"/>
    <property type="match status" value="1"/>
</dbReference>
<dbReference type="Pfam" id="PF01926">
    <property type="entry name" value="MMR_HSR1"/>
    <property type="match status" value="2"/>
</dbReference>
<dbReference type="PIRSF" id="PIRSF006485">
    <property type="entry name" value="GTP-binding_EngA"/>
    <property type="match status" value="1"/>
</dbReference>
<dbReference type="PRINTS" id="PR00326">
    <property type="entry name" value="GTP1OBG"/>
</dbReference>
<dbReference type="SUPFAM" id="SSF52540">
    <property type="entry name" value="P-loop containing nucleoside triphosphate hydrolases"/>
    <property type="match status" value="2"/>
</dbReference>
<dbReference type="PROSITE" id="PS51712">
    <property type="entry name" value="G_ENGA"/>
    <property type="match status" value="2"/>
</dbReference>
<organism>
    <name type="scientific">Pseudomonas aeruginosa (strain UCBPP-PA14)</name>
    <dbReference type="NCBI Taxonomy" id="208963"/>
    <lineage>
        <taxon>Bacteria</taxon>
        <taxon>Pseudomonadati</taxon>
        <taxon>Pseudomonadota</taxon>
        <taxon>Gammaproteobacteria</taxon>
        <taxon>Pseudomonadales</taxon>
        <taxon>Pseudomonadaceae</taxon>
        <taxon>Pseudomonas</taxon>
    </lineage>
</organism>
<feature type="chain" id="PRO_1000011699" description="GTPase Der">
    <location>
        <begin position="1"/>
        <end position="493"/>
    </location>
</feature>
<feature type="domain" description="EngA-type G 1">
    <location>
        <begin position="3"/>
        <end position="166"/>
    </location>
</feature>
<feature type="domain" description="EngA-type G 2">
    <location>
        <begin position="198"/>
        <end position="371"/>
    </location>
</feature>
<feature type="domain" description="KH-like" evidence="1">
    <location>
        <begin position="372"/>
        <end position="456"/>
    </location>
</feature>
<feature type="region of interest" description="Disordered" evidence="2">
    <location>
        <begin position="166"/>
        <end position="195"/>
    </location>
</feature>
<feature type="region of interest" description="Disordered" evidence="2">
    <location>
        <begin position="454"/>
        <end position="493"/>
    </location>
</feature>
<feature type="compositionally biased region" description="Acidic residues" evidence="2">
    <location>
        <begin position="167"/>
        <end position="184"/>
    </location>
</feature>
<feature type="compositionally biased region" description="Basic and acidic residues" evidence="2">
    <location>
        <begin position="454"/>
        <end position="463"/>
    </location>
</feature>
<feature type="compositionally biased region" description="Basic residues" evidence="2">
    <location>
        <begin position="471"/>
        <end position="493"/>
    </location>
</feature>
<feature type="binding site" evidence="1">
    <location>
        <begin position="9"/>
        <end position="16"/>
    </location>
    <ligand>
        <name>GTP</name>
        <dbReference type="ChEBI" id="CHEBI:37565"/>
        <label>1</label>
    </ligand>
</feature>
<feature type="binding site" evidence="1">
    <location>
        <begin position="56"/>
        <end position="60"/>
    </location>
    <ligand>
        <name>GTP</name>
        <dbReference type="ChEBI" id="CHEBI:37565"/>
        <label>1</label>
    </ligand>
</feature>
<feature type="binding site" evidence="1">
    <location>
        <begin position="118"/>
        <end position="121"/>
    </location>
    <ligand>
        <name>GTP</name>
        <dbReference type="ChEBI" id="CHEBI:37565"/>
        <label>1</label>
    </ligand>
</feature>
<feature type="binding site" evidence="1">
    <location>
        <begin position="204"/>
        <end position="211"/>
    </location>
    <ligand>
        <name>GTP</name>
        <dbReference type="ChEBI" id="CHEBI:37565"/>
        <label>2</label>
    </ligand>
</feature>
<feature type="binding site" evidence="1">
    <location>
        <begin position="251"/>
        <end position="255"/>
    </location>
    <ligand>
        <name>GTP</name>
        <dbReference type="ChEBI" id="CHEBI:37565"/>
        <label>2</label>
    </ligand>
</feature>
<feature type="binding site" evidence="1">
    <location>
        <begin position="316"/>
        <end position="319"/>
    </location>
    <ligand>
        <name>GTP</name>
        <dbReference type="ChEBI" id="CHEBI:37565"/>
        <label>2</label>
    </ligand>
</feature>
<comment type="function">
    <text evidence="1">GTPase that plays an essential role in the late steps of ribosome biogenesis.</text>
</comment>
<comment type="subunit">
    <text evidence="1">Associates with the 50S ribosomal subunit.</text>
</comment>
<comment type="similarity">
    <text evidence="1">Belongs to the TRAFAC class TrmE-Era-EngA-EngB-Septin-like GTPase superfamily. EngA (Der) GTPase family.</text>
</comment>
<evidence type="ECO:0000255" key="1">
    <source>
        <dbReference type="HAMAP-Rule" id="MF_00195"/>
    </source>
</evidence>
<evidence type="ECO:0000256" key="2">
    <source>
        <dbReference type="SAM" id="MobiDB-lite"/>
    </source>
</evidence>
<accession>Q02RV3</accession>
<sequence>MVPVIALVGRPNVGKSTLFNRLTKSRDAIVAEYAGLTRDRQYGEARWQGRTYIVIDTGGISGDEEGIDAKMAEQSLQAIEEADAVLFLVDSRAGMTAADQMIAEHLRKRNKRSFLIANKVDTIDPDLARAEFSPLGLGDALPIAAAHGRGINHMLQEALGIFPKDNAEEEGEGEPASEEVAEGEEPTRIPGPSEKDGIKIAIIGRPNVGKSTLVNRMLGEERVIVYDQAGTTRDSIYIPFERNEEMYTLIDTAGVRRRGKIFEAVEKFSVVKTLQAIQDANVVIFVMDAREGVVEHDLNLLGFVLETGRALVIALNKWDGMEAAERDYVKTELERRLLFVDFADIHFISALHGTGVGHLYKSVQESFRSAVTRWPTSRLTSILEDAVQVHQPPMVNGRRIKLRYAHLGGANPPLIVIHGNQVDAVPKAYTRYLEKTYRRVLKLVGTPIRIEYKGGENPYEGKKNSLTARQVNKKRRLMSHHKKAEKKKKDKRR</sequence>
<gene>
    <name evidence="1" type="primary">der</name>
    <name type="synonym">engA</name>
    <name type="ordered locus">PA14_14930</name>
</gene>
<keyword id="KW-0342">GTP-binding</keyword>
<keyword id="KW-0547">Nucleotide-binding</keyword>
<keyword id="KW-0677">Repeat</keyword>
<keyword id="KW-0690">Ribosome biogenesis</keyword>
<protein>
    <recommendedName>
        <fullName evidence="1">GTPase Der</fullName>
    </recommendedName>
    <alternativeName>
        <fullName evidence="1">GTP-binding protein EngA</fullName>
    </alternativeName>
</protein>